<evidence type="ECO:0000255" key="1">
    <source>
        <dbReference type="HAMAP-Rule" id="MF_01331"/>
    </source>
</evidence>
<evidence type="ECO:0000305" key="2"/>
<keyword id="KW-0687">Ribonucleoprotein</keyword>
<keyword id="KW-0689">Ribosomal protein</keyword>
<keyword id="KW-0694">RNA-binding</keyword>
<keyword id="KW-0699">rRNA-binding</keyword>
<gene>
    <name evidence="1" type="primary">rplV</name>
    <name type="ordered locus">ACICU_03275</name>
</gene>
<dbReference type="EMBL" id="CP000863">
    <property type="protein sequence ID" value="ACC58585.1"/>
    <property type="status" value="ALT_INIT"/>
    <property type="molecule type" value="Genomic_DNA"/>
</dbReference>
<dbReference type="SMR" id="B2HZL7"/>
<dbReference type="KEGG" id="abc:ACICU_03275"/>
<dbReference type="HOGENOM" id="CLU_083987_3_3_6"/>
<dbReference type="Proteomes" id="UP000008839">
    <property type="component" value="Chromosome"/>
</dbReference>
<dbReference type="GO" id="GO:0022625">
    <property type="term" value="C:cytosolic large ribosomal subunit"/>
    <property type="evidence" value="ECO:0007669"/>
    <property type="project" value="TreeGrafter"/>
</dbReference>
<dbReference type="GO" id="GO:0019843">
    <property type="term" value="F:rRNA binding"/>
    <property type="evidence" value="ECO:0007669"/>
    <property type="project" value="UniProtKB-UniRule"/>
</dbReference>
<dbReference type="GO" id="GO:0003735">
    <property type="term" value="F:structural constituent of ribosome"/>
    <property type="evidence" value="ECO:0007669"/>
    <property type="project" value="InterPro"/>
</dbReference>
<dbReference type="GO" id="GO:0006412">
    <property type="term" value="P:translation"/>
    <property type="evidence" value="ECO:0007669"/>
    <property type="project" value="UniProtKB-UniRule"/>
</dbReference>
<dbReference type="CDD" id="cd00336">
    <property type="entry name" value="Ribosomal_L22"/>
    <property type="match status" value="1"/>
</dbReference>
<dbReference type="FunFam" id="3.90.470.10:FF:000001">
    <property type="entry name" value="50S ribosomal protein L22"/>
    <property type="match status" value="1"/>
</dbReference>
<dbReference type="Gene3D" id="3.90.470.10">
    <property type="entry name" value="Ribosomal protein L22/L17"/>
    <property type="match status" value="1"/>
</dbReference>
<dbReference type="HAMAP" id="MF_01331_B">
    <property type="entry name" value="Ribosomal_uL22_B"/>
    <property type="match status" value="1"/>
</dbReference>
<dbReference type="InterPro" id="IPR001063">
    <property type="entry name" value="Ribosomal_uL22"/>
</dbReference>
<dbReference type="InterPro" id="IPR005727">
    <property type="entry name" value="Ribosomal_uL22_bac/chlpt-type"/>
</dbReference>
<dbReference type="InterPro" id="IPR047867">
    <property type="entry name" value="Ribosomal_uL22_bac/org-type"/>
</dbReference>
<dbReference type="InterPro" id="IPR018260">
    <property type="entry name" value="Ribosomal_uL22_CS"/>
</dbReference>
<dbReference type="InterPro" id="IPR036394">
    <property type="entry name" value="Ribosomal_uL22_sf"/>
</dbReference>
<dbReference type="NCBIfam" id="TIGR01044">
    <property type="entry name" value="rplV_bact"/>
    <property type="match status" value="1"/>
</dbReference>
<dbReference type="PANTHER" id="PTHR13501">
    <property type="entry name" value="CHLOROPLAST 50S RIBOSOMAL PROTEIN L22-RELATED"/>
    <property type="match status" value="1"/>
</dbReference>
<dbReference type="PANTHER" id="PTHR13501:SF8">
    <property type="entry name" value="LARGE RIBOSOMAL SUBUNIT PROTEIN UL22M"/>
    <property type="match status" value="1"/>
</dbReference>
<dbReference type="Pfam" id="PF00237">
    <property type="entry name" value="Ribosomal_L22"/>
    <property type="match status" value="1"/>
</dbReference>
<dbReference type="SUPFAM" id="SSF54843">
    <property type="entry name" value="Ribosomal protein L22"/>
    <property type="match status" value="1"/>
</dbReference>
<dbReference type="PROSITE" id="PS00464">
    <property type="entry name" value="RIBOSOMAL_L22"/>
    <property type="match status" value="1"/>
</dbReference>
<reference key="1">
    <citation type="journal article" date="2008" name="Antimicrob. Agents Chemother.">
        <title>Whole-genome pyrosequencing of an epidemic multidrug-resistant Acinetobacter baumannii strain belonging to the European clone II group.</title>
        <authorList>
            <person name="Iacono M."/>
            <person name="Villa L."/>
            <person name="Fortini D."/>
            <person name="Bordoni R."/>
            <person name="Imperi F."/>
            <person name="Bonnal R.J."/>
            <person name="Sicheritz-Ponten T."/>
            <person name="De Bellis G."/>
            <person name="Visca P."/>
            <person name="Cassone A."/>
            <person name="Carattoli A."/>
        </authorList>
    </citation>
    <scope>NUCLEOTIDE SEQUENCE [LARGE SCALE GENOMIC DNA]</scope>
    <source>
        <strain>ACICU</strain>
    </source>
</reference>
<accession>B2HZL7</accession>
<proteinExistence type="inferred from homology"/>
<sequence>MMEVTAKLRGAAISAQKARLVADLIRGKSVAHALNILNFSNKKAAVLVKKALESAIANAEHNNSLDVDDLKVSTIYVDEGMSLKRIMPRAKGRADRITKRTCHITVKVGV</sequence>
<protein>
    <recommendedName>
        <fullName evidence="1">Large ribosomal subunit protein uL22</fullName>
    </recommendedName>
    <alternativeName>
        <fullName evidence="2">50S ribosomal protein L22</fullName>
    </alternativeName>
</protein>
<comment type="function">
    <text evidence="1">This protein binds specifically to 23S rRNA; its binding is stimulated by other ribosomal proteins, e.g. L4, L17, and L20. It is important during the early stages of 50S assembly. It makes multiple contacts with different domains of the 23S rRNA in the assembled 50S subunit and ribosome (By similarity).</text>
</comment>
<comment type="function">
    <text evidence="1">The globular domain of the protein is located near the polypeptide exit tunnel on the outside of the subunit, while an extended beta-hairpin is found that lines the wall of the exit tunnel in the center of the 70S ribosome.</text>
</comment>
<comment type="subunit">
    <text evidence="1">Part of the 50S ribosomal subunit.</text>
</comment>
<comment type="similarity">
    <text evidence="1">Belongs to the universal ribosomal protein uL22 family.</text>
</comment>
<comment type="sequence caution" evidence="2">
    <conflict type="erroneous initiation">
        <sequence resource="EMBL-CDS" id="ACC58585"/>
    </conflict>
</comment>
<organism>
    <name type="scientific">Acinetobacter baumannii (strain ACICU)</name>
    <dbReference type="NCBI Taxonomy" id="405416"/>
    <lineage>
        <taxon>Bacteria</taxon>
        <taxon>Pseudomonadati</taxon>
        <taxon>Pseudomonadota</taxon>
        <taxon>Gammaproteobacteria</taxon>
        <taxon>Moraxellales</taxon>
        <taxon>Moraxellaceae</taxon>
        <taxon>Acinetobacter</taxon>
        <taxon>Acinetobacter calcoaceticus/baumannii complex</taxon>
    </lineage>
</organism>
<feature type="chain" id="PRO_0000354443" description="Large ribosomal subunit protein uL22">
    <location>
        <begin position="1"/>
        <end position="110"/>
    </location>
</feature>
<name>RL22_ACIBC</name>